<name>YKH3_SCHPO</name>
<keyword id="KW-0106">Calcium</keyword>
<keyword id="KW-0256">Endoplasmic reticulum</keyword>
<keyword id="KW-0445">Lipid transport</keyword>
<keyword id="KW-0446">Lipid-binding</keyword>
<keyword id="KW-0472">Membrane</keyword>
<keyword id="KW-0479">Metal-binding</keyword>
<keyword id="KW-0597">Phosphoprotein</keyword>
<keyword id="KW-1185">Reference proteome</keyword>
<keyword id="KW-0677">Repeat</keyword>
<keyword id="KW-0812">Transmembrane</keyword>
<keyword id="KW-1133">Transmembrane helix</keyword>
<keyword id="KW-0813">Transport</keyword>
<dbReference type="EMBL" id="CU329670">
    <property type="protein sequence ID" value="CAB52146.1"/>
    <property type="molecule type" value="Genomic_DNA"/>
</dbReference>
<dbReference type="EMBL" id="AB027973">
    <property type="protein sequence ID" value="BAA87277.1"/>
    <property type="molecule type" value="Genomic_DNA"/>
</dbReference>
<dbReference type="PIR" id="T39255">
    <property type="entry name" value="T39255"/>
</dbReference>
<dbReference type="SMR" id="Q9UT00"/>
<dbReference type="BioGRID" id="278736">
    <property type="interactions" value="20"/>
</dbReference>
<dbReference type="FunCoup" id="Q9UT00">
    <property type="interactions" value="29"/>
</dbReference>
<dbReference type="STRING" id="284812.Q9UT00"/>
<dbReference type="iPTMnet" id="Q9UT00"/>
<dbReference type="PaxDb" id="4896-SPAPYUK71.03c.1"/>
<dbReference type="EnsemblFungi" id="SPAPYUK71.03c.1">
    <property type="protein sequence ID" value="SPAPYUK71.03c.1:pep"/>
    <property type="gene ID" value="SPAPYUK71.03c"/>
</dbReference>
<dbReference type="KEGG" id="spo:2542267"/>
<dbReference type="PomBase" id="SPAPYUK71.03c"/>
<dbReference type="VEuPathDB" id="FungiDB:SPAPYUK71.03c"/>
<dbReference type="eggNOG" id="KOG1012">
    <property type="taxonomic scope" value="Eukaryota"/>
</dbReference>
<dbReference type="HOGENOM" id="CLU_001661_1_0_1"/>
<dbReference type="InParanoid" id="Q9UT00"/>
<dbReference type="OMA" id="YWYESSE"/>
<dbReference type="PhylomeDB" id="Q9UT00"/>
<dbReference type="PRO" id="PR:Q9UT00"/>
<dbReference type="Proteomes" id="UP000002485">
    <property type="component" value="Chromosome I"/>
</dbReference>
<dbReference type="GO" id="GO:0005783">
    <property type="term" value="C:endoplasmic reticulum"/>
    <property type="evidence" value="ECO:0007005"/>
    <property type="project" value="PomBase"/>
</dbReference>
<dbReference type="GO" id="GO:0005789">
    <property type="term" value="C:endoplasmic reticulum membrane"/>
    <property type="evidence" value="ECO:0007669"/>
    <property type="project" value="UniProtKB-SubCell"/>
</dbReference>
<dbReference type="GO" id="GO:0005886">
    <property type="term" value="C:plasma membrane"/>
    <property type="evidence" value="ECO:0000318"/>
    <property type="project" value="GO_Central"/>
</dbReference>
<dbReference type="GO" id="GO:0031520">
    <property type="term" value="C:plasma membrane of cell tip"/>
    <property type="evidence" value="ECO:0000269"/>
    <property type="project" value="PomBase"/>
</dbReference>
<dbReference type="GO" id="GO:0008289">
    <property type="term" value="F:lipid binding"/>
    <property type="evidence" value="ECO:0000318"/>
    <property type="project" value="GO_Central"/>
</dbReference>
<dbReference type="GO" id="GO:0046872">
    <property type="term" value="F:metal ion binding"/>
    <property type="evidence" value="ECO:0007669"/>
    <property type="project" value="UniProtKB-KW"/>
</dbReference>
<dbReference type="GO" id="GO:0005543">
    <property type="term" value="F:phospholipid binding"/>
    <property type="evidence" value="ECO:0000255"/>
    <property type="project" value="PomBase"/>
</dbReference>
<dbReference type="GO" id="GO:0043495">
    <property type="term" value="F:protein-membrane adaptor activity"/>
    <property type="evidence" value="ECO:0000305"/>
    <property type="project" value="PomBase"/>
</dbReference>
<dbReference type="GO" id="GO:0090158">
    <property type="term" value="P:endoplasmic reticulum membrane organization"/>
    <property type="evidence" value="ECO:0000318"/>
    <property type="project" value="GO_Central"/>
</dbReference>
<dbReference type="GO" id="GO:0061817">
    <property type="term" value="P:endoplasmic reticulum-plasma membrane tethering"/>
    <property type="evidence" value="ECO:0000266"/>
    <property type="project" value="PomBase"/>
</dbReference>
<dbReference type="GO" id="GO:0035621">
    <property type="term" value="P:ER to Golgi ceramide transport"/>
    <property type="evidence" value="ECO:0000318"/>
    <property type="project" value="GO_Central"/>
</dbReference>
<dbReference type="CDD" id="cd04044">
    <property type="entry name" value="C2A_Tricalbin-like"/>
    <property type="match status" value="1"/>
</dbReference>
<dbReference type="CDD" id="cd04052">
    <property type="entry name" value="C2B_Tricalbin-like"/>
    <property type="match status" value="1"/>
</dbReference>
<dbReference type="CDD" id="cd04045">
    <property type="entry name" value="C2C_Tricalbin-like"/>
    <property type="match status" value="1"/>
</dbReference>
<dbReference type="CDD" id="cd04040">
    <property type="entry name" value="C2D_Tricalbin-like"/>
    <property type="match status" value="1"/>
</dbReference>
<dbReference type="CDD" id="cd21678">
    <property type="entry name" value="SMP_TCB"/>
    <property type="match status" value="1"/>
</dbReference>
<dbReference type="FunFam" id="2.60.40.150:FF:000301">
    <property type="entry name" value="Tcb3p"/>
    <property type="match status" value="1"/>
</dbReference>
<dbReference type="Gene3D" id="2.60.40.150">
    <property type="entry name" value="C2 domain"/>
    <property type="match status" value="4"/>
</dbReference>
<dbReference type="InterPro" id="IPR000008">
    <property type="entry name" value="C2_dom"/>
</dbReference>
<dbReference type="InterPro" id="IPR035892">
    <property type="entry name" value="C2_domain_sf"/>
</dbReference>
<dbReference type="InterPro" id="IPR037761">
    <property type="entry name" value="C2A_Tricalbin"/>
</dbReference>
<dbReference type="InterPro" id="IPR037765">
    <property type="entry name" value="C2B_Tricalbin"/>
</dbReference>
<dbReference type="InterPro" id="IPR037762">
    <property type="entry name" value="C2C_Tricalbin"/>
</dbReference>
<dbReference type="InterPro" id="IPR037756">
    <property type="entry name" value="C2D_Tricalbin"/>
</dbReference>
<dbReference type="InterPro" id="IPR031468">
    <property type="entry name" value="SMP_LBD"/>
</dbReference>
<dbReference type="InterPro" id="IPR056910">
    <property type="entry name" value="TCB1-3_C2"/>
</dbReference>
<dbReference type="InterPro" id="IPR017147">
    <property type="entry name" value="Tricalbin"/>
</dbReference>
<dbReference type="InterPro" id="IPR052455">
    <property type="entry name" value="Tricalbin_domain"/>
</dbReference>
<dbReference type="PANTHER" id="PTHR46980">
    <property type="entry name" value="TRICALBIN-1-RELATED"/>
    <property type="match status" value="1"/>
</dbReference>
<dbReference type="PANTHER" id="PTHR46980:SF2">
    <property type="entry name" value="TRICALBIN-1-RELATED"/>
    <property type="match status" value="1"/>
</dbReference>
<dbReference type="Pfam" id="PF00168">
    <property type="entry name" value="C2"/>
    <property type="match status" value="4"/>
</dbReference>
<dbReference type="Pfam" id="PF24920">
    <property type="entry name" value="C2_TCB1"/>
    <property type="match status" value="1"/>
</dbReference>
<dbReference type="PIRSF" id="PIRSF037232">
    <property type="entry name" value="Tricalbin"/>
    <property type="match status" value="1"/>
</dbReference>
<dbReference type="SMART" id="SM00239">
    <property type="entry name" value="C2"/>
    <property type="match status" value="4"/>
</dbReference>
<dbReference type="SUPFAM" id="SSF49562">
    <property type="entry name" value="C2 domain (Calcium/lipid-binding domain, CaLB)"/>
    <property type="match status" value="4"/>
</dbReference>
<dbReference type="PROSITE" id="PS50004">
    <property type="entry name" value="C2"/>
    <property type="match status" value="4"/>
</dbReference>
<dbReference type="PROSITE" id="PS51847">
    <property type="entry name" value="SMP"/>
    <property type="match status" value="1"/>
</dbReference>
<comment type="cofactor">
    <cofactor evidence="2">
        <name>Ca(2+)</name>
        <dbReference type="ChEBI" id="CHEBI:29108"/>
    </cofactor>
</comment>
<comment type="subcellular location">
    <subcellularLocation>
        <location evidence="5 6">Endoplasmic reticulum membrane</location>
        <topology evidence="5 6">Single-pass membrane protein</topology>
    </subcellularLocation>
</comment>
<proteinExistence type="evidence at protein level"/>
<feature type="chain" id="PRO_0000116827" description="Uncharacterized protein PYUK71.03c">
    <location>
        <begin position="1"/>
        <end position="1225"/>
    </location>
</feature>
<feature type="transmembrane region" description="Helical" evidence="1">
    <location>
        <begin position="167"/>
        <end position="187"/>
    </location>
</feature>
<feature type="domain" description="SMP-LTD" evidence="3">
    <location>
        <begin position="217"/>
        <end position="422"/>
    </location>
</feature>
<feature type="domain" description="C2 1" evidence="2">
    <location>
        <begin position="413"/>
        <end position="534"/>
    </location>
</feature>
<feature type="domain" description="C2 2" evidence="2">
    <location>
        <begin position="559"/>
        <end position="668"/>
    </location>
</feature>
<feature type="domain" description="C2 3" evidence="2">
    <location>
        <begin position="685"/>
        <end position="803"/>
    </location>
</feature>
<feature type="domain" description="C2 4" evidence="2">
    <location>
        <begin position="1019"/>
        <end position="1137"/>
    </location>
</feature>
<feature type="region of interest" description="Disordered" evidence="4">
    <location>
        <begin position="1"/>
        <end position="104"/>
    </location>
</feature>
<feature type="region of interest" description="Disordered" evidence="4">
    <location>
        <begin position="867"/>
        <end position="890"/>
    </location>
</feature>
<feature type="compositionally biased region" description="Polar residues" evidence="4">
    <location>
        <begin position="1"/>
        <end position="15"/>
    </location>
</feature>
<feature type="compositionally biased region" description="Basic and acidic residues" evidence="4">
    <location>
        <begin position="16"/>
        <end position="25"/>
    </location>
</feature>
<feature type="compositionally biased region" description="Polar residues" evidence="4">
    <location>
        <begin position="43"/>
        <end position="65"/>
    </location>
</feature>
<feature type="compositionally biased region" description="Polar residues" evidence="4">
    <location>
        <begin position="869"/>
        <end position="890"/>
    </location>
</feature>
<feature type="binding site" evidence="2">
    <location>
        <position position="1053"/>
    </location>
    <ligand>
        <name>Ca(2+)</name>
        <dbReference type="ChEBI" id="CHEBI:29108"/>
        <label>1</label>
    </ligand>
</feature>
<feature type="binding site" evidence="2">
    <location>
        <position position="1053"/>
    </location>
    <ligand>
        <name>Ca(2+)</name>
        <dbReference type="ChEBI" id="CHEBI:29108"/>
        <label>2</label>
    </ligand>
</feature>
<feature type="binding site" evidence="2">
    <location>
        <position position="1059"/>
    </location>
    <ligand>
        <name>Ca(2+)</name>
        <dbReference type="ChEBI" id="CHEBI:29108"/>
        <label>1</label>
    </ligand>
</feature>
<feature type="binding site" evidence="2">
    <location>
        <position position="1107"/>
    </location>
    <ligand>
        <name>Ca(2+)</name>
        <dbReference type="ChEBI" id="CHEBI:29108"/>
        <label>1</label>
    </ligand>
</feature>
<feature type="binding site" evidence="2">
    <location>
        <position position="1107"/>
    </location>
    <ligand>
        <name>Ca(2+)</name>
        <dbReference type="ChEBI" id="CHEBI:29108"/>
        <label>2</label>
    </ligand>
</feature>
<feature type="binding site" evidence="2">
    <location>
        <position position="1109"/>
    </location>
    <ligand>
        <name>Ca(2+)</name>
        <dbReference type="ChEBI" id="CHEBI:29108"/>
        <label>1</label>
    </ligand>
</feature>
<feature type="binding site" evidence="2">
    <location>
        <position position="1109"/>
    </location>
    <ligand>
        <name>Ca(2+)</name>
        <dbReference type="ChEBI" id="CHEBI:29108"/>
        <label>2</label>
    </ligand>
</feature>
<feature type="binding site" evidence="2">
    <location>
        <position position="1115"/>
    </location>
    <ligand>
        <name>Ca(2+)</name>
        <dbReference type="ChEBI" id="CHEBI:29108"/>
        <label>2</label>
    </ligand>
</feature>
<feature type="modified residue" description="Phosphoserine" evidence="7">
    <location>
        <position position="843"/>
    </location>
</feature>
<protein>
    <recommendedName>
        <fullName>Uncharacterized protein PYUK71.03c</fullName>
    </recommendedName>
</protein>
<sequence>MSSQAEPSKGASNADPNEKVEKMHLPTDTAGGGVKVKVKEQEASPSDKNNLNPQSAGVSEVQVQDDTGARGSGARDLKVPKQMQAPKSSEEKSDVDGVPTRPVSERELRKRDAMQFIQRHQKVRNILAQYCPWLTDERLQLCIELKILFMQHFQDSRLVLYTAVMSFLFGYLRFGFLSLFIIMAVCIQYYRICDRRVKVNFKDDYTRYLSTRKLENDSETVTWLNTFLQQFWYIFEPSLSERITEITDQILSENVPSFIDSMALSEFTLGTKSPRMGFIRSYPKTEEDTVMMDLRLAFSPNDISDLTGREIAACIKPKIALDLKIGKSIASAKMPVLIEDLSFTGNLRVKVKLIDKYPYAKTVGLTFTEKPVFSYILKPLGGDKFGFDIGNIPGLTTFITEQIHNTLGPMMYSPNVYELDIESMMGAAGLNTALGAVEFKLRKGDGFKDGLGGAVDPYVVIKNSADRVIGKSKVAHNTGSPVFNETFYSVLNSFSENLNLEVYDFNDIRSDKLLGSAVLPLATLEAMPVTNDAFVELTLKGKTVGRLNYDMKFHAVVPDSGEEITKVDGPGVLQFTVHQCKELSNDPSKRPTAYAKLIINNKEVYTTRKIKKNNNPSWEESFGTLLPEGKNATLGVQIFTEESEHPFGTANVSLQDLFAATKTGLLWFPLQHAPSGRVRMSVMWKPAQLNNDSISSMALATPIGAIRIHLRSANNLHSKIPGKKCDSYARIMSHNTKQFRTVVIASNVNPFWDEYMYAPVITKHDIFFLQVMNYNSSGEDKLIGQTPINISNFINQGENGALMEYHDPRELTVPLSSTRGIKGNATITFKCDFFPSAVTTSLSPDVTPAPKASSTVATDKVNIEVLPESQKTPTAVDNTSTSRGSTSVKTSKPKKISELLMPSEAVNAALDFESGFMGFDIISYKIAKPAQELAIFLDDLPHHIFLSSALNVTGGATLHEYGNTFIRQLEYSQCTFKLLDGDKEVGSKTMLSRDLISKGATKPLEIAFPDGASILVAFRLTPVPVKLEEVEMYENMGEMTVDVIKATDLPAADSNGKSDPFVVFELQGEEVYRTKTHKRTLNPTFNESFEVELPCKQTCNFVANVFDWDFGNKDDHLGSCVIDCKLLQQQQQTNYEIPLDSKQGVLYLRITLSPKWVLRSKRAGNSSLVEGILGQTASIVGMPLKGISTVGNVAVDGVASVANLTNKMRKGISRGFKGIHHEKAK</sequence>
<reference key="1">
    <citation type="journal article" date="2002" name="Nature">
        <title>The genome sequence of Schizosaccharomyces pombe.</title>
        <authorList>
            <person name="Wood V."/>
            <person name="Gwilliam R."/>
            <person name="Rajandream M.A."/>
            <person name="Lyne M.H."/>
            <person name="Lyne R."/>
            <person name="Stewart A."/>
            <person name="Sgouros J.G."/>
            <person name="Peat N."/>
            <person name="Hayles J."/>
            <person name="Baker S.G."/>
            <person name="Basham D."/>
            <person name="Bowman S."/>
            <person name="Brooks K."/>
            <person name="Brown D."/>
            <person name="Brown S."/>
            <person name="Chillingworth T."/>
            <person name="Churcher C.M."/>
            <person name="Collins M."/>
            <person name="Connor R."/>
            <person name="Cronin A."/>
            <person name="Davis P."/>
            <person name="Feltwell T."/>
            <person name="Fraser A."/>
            <person name="Gentles S."/>
            <person name="Goble A."/>
            <person name="Hamlin N."/>
            <person name="Harris D.E."/>
            <person name="Hidalgo J."/>
            <person name="Hodgson G."/>
            <person name="Holroyd S."/>
            <person name="Hornsby T."/>
            <person name="Howarth S."/>
            <person name="Huckle E.J."/>
            <person name="Hunt S."/>
            <person name="Jagels K."/>
            <person name="James K.D."/>
            <person name="Jones L."/>
            <person name="Jones M."/>
            <person name="Leather S."/>
            <person name="McDonald S."/>
            <person name="McLean J."/>
            <person name="Mooney P."/>
            <person name="Moule S."/>
            <person name="Mungall K.L."/>
            <person name="Murphy L.D."/>
            <person name="Niblett D."/>
            <person name="Odell C."/>
            <person name="Oliver K."/>
            <person name="O'Neil S."/>
            <person name="Pearson D."/>
            <person name="Quail M.A."/>
            <person name="Rabbinowitsch E."/>
            <person name="Rutherford K.M."/>
            <person name="Rutter S."/>
            <person name="Saunders D."/>
            <person name="Seeger K."/>
            <person name="Sharp S."/>
            <person name="Skelton J."/>
            <person name="Simmonds M.N."/>
            <person name="Squares R."/>
            <person name="Squares S."/>
            <person name="Stevens K."/>
            <person name="Taylor K."/>
            <person name="Taylor R.G."/>
            <person name="Tivey A."/>
            <person name="Walsh S.V."/>
            <person name="Warren T."/>
            <person name="Whitehead S."/>
            <person name="Woodward J.R."/>
            <person name="Volckaert G."/>
            <person name="Aert R."/>
            <person name="Robben J."/>
            <person name="Grymonprez B."/>
            <person name="Weltjens I."/>
            <person name="Vanstreels E."/>
            <person name="Rieger M."/>
            <person name="Schaefer M."/>
            <person name="Mueller-Auer S."/>
            <person name="Gabel C."/>
            <person name="Fuchs M."/>
            <person name="Duesterhoeft A."/>
            <person name="Fritzc C."/>
            <person name="Holzer E."/>
            <person name="Moestl D."/>
            <person name="Hilbert H."/>
            <person name="Borzym K."/>
            <person name="Langer I."/>
            <person name="Beck A."/>
            <person name="Lehrach H."/>
            <person name="Reinhardt R."/>
            <person name="Pohl T.M."/>
            <person name="Eger P."/>
            <person name="Zimmermann W."/>
            <person name="Wedler H."/>
            <person name="Wambutt R."/>
            <person name="Purnelle B."/>
            <person name="Goffeau A."/>
            <person name="Cadieu E."/>
            <person name="Dreano S."/>
            <person name="Gloux S."/>
            <person name="Lelaure V."/>
            <person name="Mottier S."/>
            <person name="Galibert F."/>
            <person name="Aves S.J."/>
            <person name="Xiang Z."/>
            <person name="Hunt C."/>
            <person name="Moore K."/>
            <person name="Hurst S.M."/>
            <person name="Lucas M."/>
            <person name="Rochet M."/>
            <person name="Gaillardin C."/>
            <person name="Tallada V.A."/>
            <person name="Garzon A."/>
            <person name="Thode G."/>
            <person name="Daga R.R."/>
            <person name="Cruzado L."/>
            <person name="Jimenez J."/>
            <person name="Sanchez M."/>
            <person name="del Rey F."/>
            <person name="Benito J."/>
            <person name="Dominguez A."/>
            <person name="Revuelta J.L."/>
            <person name="Moreno S."/>
            <person name="Armstrong J."/>
            <person name="Forsburg S.L."/>
            <person name="Cerutti L."/>
            <person name="Lowe T."/>
            <person name="McCombie W.R."/>
            <person name="Paulsen I."/>
            <person name="Potashkin J."/>
            <person name="Shpakovski G.V."/>
            <person name="Ussery D."/>
            <person name="Barrell B.G."/>
            <person name="Nurse P."/>
        </authorList>
    </citation>
    <scope>NUCLEOTIDE SEQUENCE [LARGE SCALE GENOMIC DNA]</scope>
    <source>
        <strain>972 / ATCC 24843</strain>
    </source>
</reference>
<reference key="2">
    <citation type="journal article" date="2000" name="Genes Cells">
        <title>Large-scale screening of intracellular protein localization in living fission yeast cells by the use of a GFP-fusion genomic DNA library.</title>
        <authorList>
            <person name="Ding D.-Q."/>
            <person name="Tomita Y."/>
            <person name="Yamamoto A."/>
            <person name="Chikashige Y."/>
            <person name="Haraguchi T."/>
            <person name="Hiraoka Y."/>
        </authorList>
    </citation>
    <scope>NUCLEOTIDE SEQUENCE [LARGE SCALE GENOMIC DNA] OF 928-1115</scope>
    <scope>SUBCELLULAR LOCATION</scope>
    <source>
        <strain>ATCC 38364 / 968</strain>
    </source>
</reference>
<reference key="3">
    <citation type="journal article" date="2006" name="Nat. Biotechnol.">
        <title>ORFeome cloning and global analysis of protein localization in the fission yeast Schizosaccharomyces pombe.</title>
        <authorList>
            <person name="Matsuyama A."/>
            <person name="Arai R."/>
            <person name="Yashiroda Y."/>
            <person name="Shirai A."/>
            <person name="Kamata A."/>
            <person name="Sekido S."/>
            <person name="Kobayashi Y."/>
            <person name="Hashimoto A."/>
            <person name="Hamamoto M."/>
            <person name="Hiraoka Y."/>
            <person name="Horinouchi S."/>
            <person name="Yoshida M."/>
        </authorList>
    </citation>
    <scope>SUBCELLULAR LOCATION [LARGE SCALE ANALYSIS]</scope>
</reference>
<reference key="4">
    <citation type="journal article" date="2008" name="J. Proteome Res.">
        <title>Phosphoproteome analysis of fission yeast.</title>
        <authorList>
            <person name="Wilson-Grady J.T."/>
            <person name="Villen J."/>
            <person name="Gygi S.P."/>
        </authorList>
    </citation>
    <scope>PHOSPHORYLATION [LARGE SCALE ANALYSIS] AT SER-843</scope>
    <scope>IDENTIFICATION BY MASS SPECTROMETRY</scope>
</reference>
<accession>Q9UT00</accession>
<accession>Q9UTV4</accession>
<evidence type="ECO:0000255" key="1"/>
<evidence type="ECO:0000255" key="2">
    <source>
        <dbReference type="PROSITE-ProRule" id="PRU00041"/>
    </source>
</evidence>
<evidence type="ECO:0000255" key="3">
    <source>
        <dbReference type="PROSITE-ProRule" id="PRU01194"/>
    </source>
</evidence>
<evidence type="ECO:0000256" key="4">
    <source>
        <dbReference type="SAM" id="MobiDB-lite"/>
    </source>
</evidence>
<evidence type="ECO:0000269" key="5">
    <source>
    </source>
</evidence>
<evidence type="ECO:0000269" key="6">
    <source>
    </source>
</evidence>
<evidence type="ECO:0000269" key="7">
    <source>
    </source>
</evidence>
<organism>
    <name type="scientific">Schizosaccharomyces pombe (strain 972 / ATCC 24843)</name>
    <name type="common">Fission yeast</name>
    <dbReference type="NCBI Taxonomy" id="284812"/>
    <lineage>
        <taxon>Eukaryota</taxon>
        <taxon>Fungi</taxon>
        <taxon>Dikarya</taxon>
        <taxon>Ascomycota</taxon>
        <taxon>Taphrinomycotina</taxon>
        <taxon>Schizosaccharomycetes</taxon>
        <taxon>Schizosaccharomycetales</taxon>
        <taxon>Schizosaccharomycetaceae</taxon>
        <taxon>Schizosaccharomyces</taxon>
    </lineage>
</organism>
<gene>
    <name type="ORF">SPAPYUK71.03c</name>
</gene>